<accession>O79455</accession>
<accession>O21417</accession>
<geneLocation type="mitochondrion"/>
<reference key="1">
    <citation type="journal article" date="1997" name="Zool. Sci.">
        <title>Molecular phylogeny from nucleotide sequences of the mitochondrial cytochrome b gene and evolutionary history of Eurasian soricine shrews (Mammalia, Insectivora).</title>
        <authorList>
            <person name="Ohdachi S."/>
            <person name="Masuda R."/>
            <person name="Abe H."/>
            <person name="Adachi J."/>
            <person name="Dokuchaev N.E."/>
            <person name="Haukisalmi V."/>
            <person name="Yoshida M.C."/>
        </authorList>
    </citation>
    <scope>NUCLEOTIDE SEQUENCE [GENOMIC DNA] OF 1-134</scope>
    <source>
        <strain>Isolate 94/9/16-1</strain>
        <tissue>Muscle</tissue>
    </source>
</reference>
<reference key="2">
    <citation type="journal article" date="1999" name="Mol. Phylogenet. Evol.">
        <title>Molecular phylogeny and evolution of Sorex shrews (Soricidae: Insectivora) inferred from mitochondrial DNA sequence data.</title>
        <authorList>
            <person name="Fumagalli L."/>
            <person name="Taberlet P."/>
            <person name="Stewart D.T."/>
            <person name="Gielly L."/>
            <person name="Hausser J."/>
            <person name="Vogel P."/>
        </authorList>
    </citation>
    <scope>NUCLEOTIDE SEQUENCE [GENOMIC DNA] OF 44-379</scope>
</reference>
<proteinExistence type="inferred from homology"/>
<gene>
    <name type="primary">MT-CYB</name>
    <name type="synonym">COB</name>
    <name type="synonym">CYTB</name>
    <name type="synonym">MTCYB</name>
</gene>
<organism>
    <name type="scientific">Sorex minutissimus</name>
    <name type="common">Eurasian least shrew</name>
    <name type="synonym">Eurasian pygmy shrew</name>
    <dbReference type="NCBI Taxonomy" id="62274"/>
    <lineage>
        <taxon>Eukaryota</taxon>
        <taxon>Metazoa</taxon>
        <taxon>Chordata</taxon>
        <taxon>Craniata</taxon>
        <taxon>Vertebrata</taxon>
        <taxon>Euteleostomi</taxon>
        <taxon>Mammalia</taxon>
        <taxon>Eutheria</taxon>
        <taxon>Laurasiatheria</taxon>
        <taxon>Eulipotyphla</taxon>
        <taxon>Soricidae</taxon>
        <taxon>Soricinae</taxon>
        <taxon>Sorex</taxon>
    </lineage>
</organism>
<protein>
    <recommendedName>
        <fullName>Cytochrome b</fullName>
    </recommendedName>
    <alternativeName>
        <fullName>Complex III subunit 3</fullName>
    </alternativeName>
    <alternativeName>
        <fullName>Complex III subunit III</fullName>
    </alternativeName>
    <alternativeName>
        <fullName>Cytochrome b-c1 complex subunit 3</fullName>
    </alternativeName>
    <alternativeName>
        <fullName>Ubiquinol-cytochrome-c reductase complex cytochrome b subunit</fullName>
    </alternativeName>
</protein>
<feature type="chain" id="PRO_0000061570" description="Cytochrome b">
    <location>
        <begin position="1"/>
        <end position="379"/>
    </location>
</feature>
<feature type="transmembrane region" description="Helical" evidence="2">
    <location>
        <begin position="33"/>
        <end position="53"/>
    </location>
</feature>
<feature type="transmembrane region" description="Helical" evidence="2">
    <location>
        <begin position="77"/>
        <end position="98"/>
    </location>
</feature>
<feature type="transmembrane region" description="Helical" evidence="2">
    <location>
        <begin position="113"/>
        <end position="133"/>
    </location>
</feature>
<feature type="transmembrane region" description="Helical" evidence="2">
    <location>
        <begin position="178"/>
        <end position="198"/>
    </location>
</feature>
<feature type="transmembrane region" description="Helical" evidence="2">
    <location>
        <begin position="226"/>
        <end position="246"/>
    </location>
</feature>
<feature type="transmembrane region" description="Helical" evidence="2">
    <location>
        <begin position="288"/>
        <end position="308"/>
    </location>
</feature>
<feature type="transmembrane region" description="Helical" evidence="2">
    <location>
        <begin position="320"/>
        <end position="340"/>
    </location>
</feature>
<feature type="transmembrane region" description="Helical" evidence="2">
    <location>
        <begin position="347"/>
        <end position="367"/>
    </location>
</feature>
<feature type="binding site" description="axial binding residue" evidence="2">
    <location>
        <position position="83"/>
    </location>
    <ligand>
        <name>heme b</name>
        <dbReference type="ChEBI" id="CHEBI:60344"/>
        <label>b562</label>
    </ligand>
    <ligandPart>
        <name>Fe</name>
        <dbReference type="ChEBI" id="CHEBI:18248"/>
    </ligandPart>
</feature>
<feature type="binding site" description="axial binding residue" evidence="2">
    <location>
        <position position="97"/>
    </location>
    <ligand>
        <name>heme b</name>
        <dbReference type="ChEBI" id="CHEBI:60344"/>
        <label>b566</label>
    </ligand>
    <ligandPart>
        <name>Fe</name>
        <dbReference type="ChEBI" id="CHEBI:18248"/>
    </ligandPart>
</feature>
<feature type="binding site" description="axial binding residue" evidence="2">
    <location>
        <position position="182"/>
    </location>
    <ligand>
        <name>heme b</name>
        <dbReference type="ChEBI" id="CHEBI:60344"/>
        <label>b562</label>
    </ligand>
    <ligandPart>
        <name>Fe</name>
        <dbReference type="ChEBI" id="CHEBI:18248"/>
    </ligandPart>
</feature>
<feature type="binding site" description="axial binding residue" evidence="2">
    <location>
        <position position="196"/>
    </location>
    <ligand>
        <name>heme b</name>
        <dbReference type="ChEBI" id="CHEBI:60344"/>
        <label>b566</label>
    </ligand>
    <ligandPart>
        <name>Fe</name>
        <dbReference type="ChEBI" id="CHEBI:18248"/>
    </ligandPart>
</feature>
<feature type="binding site" evidence="2">
    <location>
        <position position="201"/>
    </location>
    <ligand>
        <name>a ubiquinone</name>
        <dbReference type="ChEBI" id="CHEBI:16389"/>
    </ligand>
</feature>
<feature type="sequence conflict" description="In Ref. 1; BAA21337." evidence="5" ref="1">
    <original>V</original>
    <variation>I</variation>
    <location>
        <position position="98"/>
    </location>
</feature>
<feature type="sequence conflict" description="In Ref. 1; BAA21337." evidence="5" ref="1">
    <original>K</original>
    <variation>E</variation>
    <location>
        <position position="111"/>
    </location>
</feature>
<name>CYB_SORMN</name>
<comment type="function">
    <text evidence="2">Component of the ubiquinol-cytochrome c reductase complex (complex III or cytochrome b-c1 complex) that is part of the mitochondrial respiratory chain. The b-c1 complex mediates electron transfer from ubiquinol to cytochrome c. Contributes to the generation of a proton gradient across the mitochondrial membrane that is then used for ATP synthesis.</text>
</comment>
<comment type="cofactor">
    <cofactor evidence="2">
        <name>heme b</name>
        <dbReference type="ChEBI" id="CHEBI:60344"/>
    </cofactor>
    <text evidence="2">Binds 2 heme b groups non-covalently.</text>
</comment>
<comment type="subunit">
    <text evidence="2">The cytochrome bc1 complex contains 11 subunits: 3 respiratory subunits (MT-CYB, CYC1 and UQCRFS1), 2 core proteins (UQCRC1 and UQCRC2) and 6 low-molecular weight proteins (UQCRH/QCR6, UQCRB/QCR7, UQCRQ/QCR8, UQCR10/QCR9, UQCR11/QCR10 and a cleavage product of UQCRFS1). This cytochrome bc1 complex then forms a dimer.</text>
</comment>
<comment type="subcellular location">
    <subcellularLocation>
        <location evidence="2">Mitochondrion inner membrane</location>
        <topology evidence="2">Multi-pass membrane protein</topology>
    </subcellularLocation>
</comment>
<comment type="miscellaneous">
    <text evidence="1">Heme 1 (or BL or b562) is low-potential and absorbs at about 562 nm, and heme 2 (or BH or b566) is high-potential and absorbs at about 566 nm.</text>
</comment>
<comment type="similarity">
    <text evidence="3 4">Belongs to the cytochrome b family.</text>
</comment>
<comment type="caution">
    <text evidence="2">The full-length protein contains only eight transmembrane helices, not nine as predicted by bioinformatics tools.</text>
</comment>
<keyword id="KW-0249">Electron transport</keyword>
<keyword id="KW-0349">Heme</keyword>
<keyword id="KW-0408">Iron</keyword>
<keyword id="KW-0472">Membrane</keyword>
<keyword id="KW-0479">Metal-binding</keyword>
<keyword id="KW-0496">Mitochondrion</keyword>
<keyword id="KW-0999">Mitochondrion inner membrane</keyword>
<keyword id="KW-0679">Respiratory chain</keyword>
<keyword id="KW-0812">Transmembrane</keyword>
<keyword id="KW-1133">Transmembrane helix</keyword>
<keyword id="KW-0813">Transport</keyword>
<keyword id="KW-0830">Ubiquinone</keyword>
<evidence type="ECO:0000250" key="1"/>
<evidence type="ECO:0000250" key="2">
    <source>
        <dbReference type="UniProtKB" id="P00157"/>
    </source>
</evidence>
<evidence type="ECO:0000255" key="3">
    <source>
        <dbReference type="PROSITE-ProRule" id="PRU00967"/>
    </source>
</evidence>
<evidence type="ECO:0000255" key="4">
    <source>
        <dbReference type="PROSITE-ProRule" id="PRU00968"/>
    </source>
</evidence>
<evidence type="ECO:0000305" key="5"/>
<dbReference type="EMBL" id="D85344">
    <property type="protein sequence ID" value="BAA21337.1"/>
    <property type="molecule type" value="Genomic_DNA"/>
</dbReference>
<dbReference type="EMBL" id="AJ000442">
    <property type="protein sequence ID" value="CAA04086.1"/>
    <property type="molecule type" value="Genomic_DNA"/>
</dbReference>
<dbReference type="SMR" id="O79455"/>
<dbReference type="GO" id="GO:0005743">
    <property type="term" value="C:mitochondrial inner membrane"/>
    <property type="evidence" value="ECO:0007669"/>
    <property type="project" value="UniProtKB-SubCell"/>
</dbReference>
<dbReference type="GO" id="GO:0045275">
    <property type="term" value="C:respiratory chain complex III"/>
    <property type="evidence" value="ECO:0007669"/>
    <property type="project" value="InterPro"/>
</dbReference>
<dbReference type="GO" id="GO:0046872">
    <property type="term" value="F:metal ion binding"/>
    <property type="evidence" value="ECO:0007669"/>
    <property type="project" value="UniProtKB-KW"/>
</dbReference>
<dbReference type="GO" id="GO:0008121">
    <property type="term" value="F:ubiquinol-cytochrome-c reductase activity"/>
    <property type="evidence" value="ECO:0007669"/>
    <property type="project" value="InterPro"/>
</dbReference>
<dbReference type="GO" id="GO:0006122">
    <property type="term" value="P:mitochondrial electron transport, ubiquinol to cytochrome c"/>
    <property type="evidence" value="ECO:0007669"/>
    <property type="project" value="TreeGrafter"/>
</dbReference>
<dbReference type="CDD" id="cd00290">
    <property type="entry name" value="cytochrome_b_C"/>
    <property type="match status" value="1"/>
</dbReference>
<dbReference type="CDD" id="cd00284">
    <property type="entry name" value="Cytochrome_b_N"/>
    <property type="match status" value="1"/>
</dbReference>
<dbReference type="FunFam" id="1.20.810.10:FF:000002">
    <property type="entry name" value="Cytochrome b"/>
    <property type="match status" value="1"/>
</dbReference>
<dbReference type="Gene3D" id="1.20.810.10">
    <property type="entry name" value="Cytochrome Bc1 Complex, Chain C"/>
    <property type="match status" value="1"/>
</dbReference>
<dbReference type="InterPro" id="IPR005798">
    <property type="entry name" value="Cyt_b/b6_C"/>
</dbReference>
<dbReference type="InterPro" id="IPR036150">
    <property type="entry name" value="Cyt_b/b6_C_sf"/>
</dbReference>
<dbReference type="InterPro" id="IPR005797">
    <property type="entry name" value="Cyt_b/b6_N"/>
</dbReference>
<dbReference type="InterPro" id="IPR027387">
    <property type="entry name" value="Cytb/b6-like_sf"/>
</dbReference>
<dbReference type="InterPro" id="IPR030689">
    <property type="entry name" value="Cytochrome_b"/>
</dbReference>
<dbReference type="InterPro" id="IPR048260">
    <property type="entry name" value="Cytochrome_b_C_euk/bac"/>
</dbReference>
<dbReference type="InterPro" id="IPR048259">
    <property type="entry name" value="Cytochrome_b_N_euk/bac"/>
</dbReference>
<dbReference type="InterPro" id="IPR016174">
    <property type="entry name" value="Di-haem_cyt_TM"/>
</dbReference>
<dbReference type="PANTHER" id="PTHR19271">
    <property type="entry name" value="CYTOCHROME B"/>
    <property type="match status" value="1"/>
</dbReference>
<dbReference type="PANTHER" id="PTHR19271:SF16">
    <property type="entry name" value="CYTOCHROME B"/>
    <property type="match status" value="1"/>
</dbReference>
<dbReference type="Pfam" id="PF00032">
    <property type="entry name" value="Cytochrom_B_C"/>
    <property type="match status" value="1"/>
</dbReference>
<dbReference type="Pfam" id="PF00033">
    <property type="entry name" value="Cytochrome_B"/>
    <property type="match status" value="1"/>
</dbReference>
<dbReference type="PIRSF" id="PIRSF038885">
    <property type="entry name" value="COB"/>
    <property type="match status" value="1"/>
</dbReference>
<dbReference type="SUPFAM" id="SSF81648">
    <property type="entry name" value="a domain/subunit of cytochrome bc1 complex (Ubiquinol-cytochrome c reductase)"/>
    <property type="match status" value="1"/>
</dbReference>
<dbReference type="SUPFAM" id="SSF81342">
    <property type="entry name" value="Transmembrane di-heme cytochromes"/>
    <property type="match status" value="1"/>
</dbReference>
<dbReference type="PROSITE" id="PS51003">
    <property type="entry name" value="CYTB_CTER"/>
    <property type="match status" value="1"/>
</dbReference>
<dbReference type="PROSITE" id="PS51002">
    <property type="entry name" value="CYTB_NTER"/>
    <property type="match status" value="1"/>
</dbReference>
<sequence length="379" mass="42662">MTNLRKTHPLMKIVNSSFIDLPAPSNISSWWNFGSLLGVCLIIQILTGLFLAMHYTSDTMTAFSSVTHICRDVNYGWLIRYLHANGASMFFICLFLHVGRGLYYGSYMFLKTWNIGVLLLFAVMATAFMGYVLPWGQMSFWGATVITNLLSAIPYIGSDLVEWIWGGFSVDKATLTRFFAFHFILPFIIAALAGVHLPFLHETGSNNPSGLSSDADKIPFHPYYTIKDILGVLLLILALTSLVLFSPDLLGDPDKYTPANPLNTPPHIKPEWYFLFAYAILRSIPNKLGGVLALVLSILILAEVPFLHTSKQRSMMFRPFSQCLFWILVADLLTLTWMGGQPVEHPFIIMGQLASILYFLLILVMMPITSLFENNLLKW</sequence>